<gene>
    <name evidence="1" type="primary">ileS</name>
    <name type="ordered locus">Ta0879</name>
</gene>
<sequence length="1026" mass="119169">MQSLRFRQIDPGMTLREIDSEILKYWKDKNILEKILSKGGSKKFVFLEGPPTANGRPHIGHAMTRTIKDIVLRYNTMTDHKIYRRVGGWDCHGLPVELEAEKHFGFHTKSEIVNFGVEKFNQYCRESIFRYIDEWKQVDDLIGFSIDHNGDYITLRNDYMESEWFALKTMYNSGLLYKDYTVVPYCPRCETSLSSHEVAQGYKDVKDPSVYVRFKSADEENTYFVAWTTTPWTLPSNEFLVVNPDMEYSLVEAQGSRYYVASSRAGYIFKEYREIRRMHGRDLVGKRYLQLMPFLDPPSGSLKVVAGSFVTSEDGSGIVHAAPAFGADDYQIGKEEGVEILNPVDKNGRFADPRIPWNGKFVRDANEDIIVYLKKNQMLLKSEKYEHSYPFCYRCDTPLLYYPLDAWFIAVSRIRDKLVEYNERINWKPDYLKHGRFGNFLGEAKDWNLSRDRFWGTPLPAWRCKNGHLVFVGSRKEIEDLGGKVPEDLHRPYIDEVRFKCPTCGEEMSREPYVIDTWFDSGSATYAASHYPFEKNFDPETDVPVSFITEAIDQTRGWFYVLHVIATIMFNKNAYESALSINFILDAQGRKMSKSKGNSVYALDFLNEVPPDSLRLFFLYGAPWKSKNLDKKVIDEVSRKTLMTVLNVYSFFAYNANIDNFQWNGLQLSGNALDRYMVSKVNSFVRSSRDAYESLDFHEVVRASMEFVDDLSNFYLRLSRRRFWAEGFDDDKLSAYSTLYYALKAFSEVMAPITPFFSDFIYLNLGGDKESVHLEAFPEFDSTLMDEKLESEMDRAYSVIETVRRLRQENSIKGRQPLREILIAGDMEESIIDVVKSELNAKDIKLIERDQEPIRLSADLRMDRAAPVLRSRVNAVRHKIRSMDGLEVQRQISEKGFVEIDGVRLDPDMVEISRVPDPNYAYSQTEKYGIDVFINKNIDRDGYLEGLARELVRRIQVMRKEMNLNYTDRIITHLDLSDDFLEALNKHAEYIKNETQSDSIITDKVEGMKLWEINGEPVRIKIDLAR</sequence>
<feature type="chain" id="PRO_0000098595" description="Isoleucine--tRNA ligase">
    <location>
        <begin position="1"/>
        <end position="1026"/>
    </location>
</feature>
<feature type="short sequence motif" description="'HIGH' region">
    <location>
        <begin position="51"/>
        <end position="61"/>
    </location>
</feature>
<feature type="short sequence motif" description="'KMSKS' region">
    <location>
        <begin position="591"/>
        <end position="595"/>
    </location>
</feature>
<feature type="binding site" evidence="1">
    <location>
        <position position="594"/>
    </location>
    <ligand>
        <name>ATP</name>
        <dbReference type="ChEBI" id="CHEBI:30616"/>
    </ligand>
</feature>
<keyword id="KW-0030">Aminoacyl-tRNA synthetase</keyword>
<keyword id="KW-0067">ATP-binding</keyword>
<keyword id="KW-0963">Cytoplasm</keyword>
<keyword id="KW-0436">Ligase</keyword>
<keyword id="KW-0479">Metal-binding</keyword>
<keyword id="KW-0547">Nucleotide-binding</keyword>
<keyword id="KW-0648">Protein biosynthesis</keyword>
<keyword id="KW-1185">Reference proteome</keyword>
<keyword id="KW-0862">Zinc</keyword>
<proteinExistence type="inferred from homology"/>
<reference key="1">
    <citation type="journal article" date="2000" name="Nature">
        <title>The genome sequence of the thermoacidophilic scavenger Thermoplasma acidophilum.</title>
        <authorList>
            <person name="Ruepp A."/>
            <person name="Graml W."/>
            <person name="Santos-Martinez M.-L."/>
            <person name="Koretke K.K."/>
            <person name="Volker C."/>
            <person name="Mewes H.-W."/>
            <person name="Frishman D."/>
            <person name="Stocker S."/>
            <person name="Lupas A.N."/>
            <person name="Baumeister W."/>
        </authorList>
    </citation>
    <scope>NUCLEOTIDE SEQUENCE [LARGE SCALE GENOMIC DNA]</scope>
    <source>
        <strain>ATCC 25905 / DSM 1728 / JCM 9062 / NBRC 15155 / AMRC-C165</strain>
    </source>
</reference>
<organism>
    <name type="scientific">Thermoplasma acidophilum (strain ATCC 25905 / DSM 1728 / JCM 9062 / NBRC 15155 / AMRC-C165)</name>
    <dbReference type="NCBI Taxonomy" id="273075"/>
    <lineage>
        <taxon>Archaea</taxon>
        <taxon>Methanobacteriati</taxon>
        <taxon>Thermoplasmatota</taxon>
        <taxon>Thermoplasmata</taxon>
        <taxon>Thermoplasmatales</taxon>
        <taxon>Thermoplasmataceae</taxon>
        <taxon>Thermoplasma</taxon>
    </lineage>
</organism>
<evidence type="ECO:0000255" key="1">
    <source>
        <dbReference type="HAMAP-Rule" id="MF_02003"/>
    </source>
</evidence>
<evidence type="ECO:0000305" key="2"/>
<protein>
    <recommendedName>
        <fullName evidence="1">Isoleucine--tRNA ligase</fullName>
        <ecNumber evidence="1">6.1.1.5</ecNumber>
    </recommendedName>
    <alternativeName>
        <fullName evidence="1">Isoleucyl-tRNA synthetase</fullName>
        <shortName evidence="1">IleRS</shortName>
    </alternativeName>
</protein>
<accession>Q9HJT4</accession>
<name>SYI_THEAC</name>
<dbReference type="EC" id="6.1.1.5" evidence="1"/>
<dbReference type="EMBL" id="AL445065">
    <property type="protein sequence ID" value="CAC12008.1"/>
    <property type="status" value="ALT_INIT"/>
    <property type="molecule type" value="Genomic_DNA"/>
</dbReference>
<dbReference type="RefSeq" id="WP_048161849.1">
    <property type="nucleotide sequence ID" value="NC_002578.1"/>
</dbReference>
<dbReference type="SMR" id="Q9HJT4"/>
<dbReference type="FunCoup" id="Q9HJT4">
    <property type="interactions" value="226"/>
</dbReference>
<dbReference type="STRING" id="273075.gene:9572093"/>
<dbReference type="PaxDb" id="273075-Ta0879"/>
<dbReference type="EnsemblBacteria" id="CAC12008">
    <property type="protein sequence ID" value="CAC12008"/>
    <property type="gene ID" value="CAC12008"/>
</dbReference>
<dbReference type="KEGG" id="tac:Ta0879"/>
<dbReference type="eggNOG" id="arCOG00807">
    <property type="taxonomic scope" value="Archaea"/>
</dbReference>
<dbReference type="HOGENOM" id="CLU_001493_1_1_2"/>
<dbReference type="InParanoid" id="Q9HJT4"/>
<dbReference type="OrthoDB" id="30823at2157"/>
<dbReference type="Proteomes" id="UP000001024">
    <property type="component" value="Chromosome"/>
</dbReference>
<dbReference type="GO" id="GO:0005737">
    <property type="term" value="C:cytoplasm"/>
    <property type="evidence" value="ECO:0007669"/>
    <property type="project" value="UniProtKB-SubCell"/>
</dbReference>
<dbReference type="GO" id="GO:0002161">
    <property type="term" value="F:aminoacyl-tRNA deacylase activity"/>
    <property type="evidence" value="ECO:0007669"/>
    <property type="project" value="InterPro"/>
</dbReference>
<dbReference type="GO" id="GO:0005524">
    <property type="term" value="F:ATP binding"/>
    <property type="evidence" value="ECO:0007669"/>
    <property type="project" value="UniProtKB-UniRule"/>
</dbReference>
<dbReference type="GO" id="GO:0004822">
    <property type="term" value="F:isoleucine-tRNA ligase activity"/>
    <property type="evidence" value="ECO:0007669"/>
    <property type="project" value="UniProtKB-UniRule"/>
</dbReference>
<dbReference type="GO" id="GO:0000049">
    <property type="term" value="F:tRNA binding"/>
    <property type="evidence" value="ECO:0007669"/>
    <property type="project" value="InterPro"/>
</dbReference>
<dbReference type="GO" id="GO:0008270">
    <property type="term" value="F:zinc ion binding"/>
    <property type="evidence" value="ECO:0007669"/>
    <property type="project" value="UniProtKB-UniRule"/>
</dbReference>
<dbReference type="GO" id="GO:0006428">
    <property type="term" value="P:isoleucyl-tRNA aminoacylation"/>
    <property type="evidence" value="ECO:0007669"/>
    <property type="project" value="UniProtKB-UniRule"/>
</dbReference>
<dbReference type="CDD" id="cd07961">
    <property type="entry name" value="Anticodon_Ia_Ile_ABEc"/>
    <property type="match status" value="1"/>
</dbReference>
<dbReference type="CDD" id="cd00818">
    <property type="entry name" value="IleRS_core"/>
    <property type="match status" value="1"/>
</dbReference>
<dbReference type="Gene3D" id="3.40.50.620">
    <property type="entry name" value="HUPs"/>
    <property type="match status" value="2"/>
</dbReference>
<dbReference type="Gene3D" id="1.10.730.10">
    <property type="entry name" value="Isoleucyl-tRNA Synthetase, Domain 1"/>
    <property type="match status" value="1"/>
</dbReference>
<dbReference type="Gene3D" id="3.90.740.10">
    <property type="entry name" value="Valyl/Leucyl/Isoleucyl-tRNA synthetase, editing domain"/>
    <property type="match status" value="1"/>
</dbReference>
<dbReference type="HAMAP" id="MF_02003">
    <property type="entry name" value="Ile_tRNA_synth_type2"/>
    <property type="match status" value="1"/>
</dbReference>
<dbReference type="InterPro" id="IPR001412">
    <property type="entry name" value="aa-tRNA-synth_I_CS"/>
</dbReference>
<dbReference type="InterPro" id="IPR002300">
    <property type="entry name" value="aa-tRNA-synth_Ia"/>
</dbReference>
<dbReference type="InterPro" id="IPR033709">
    <property type="entry name" value="Anticodon_Ile_ABEc"/>
</dbReference>
<dbReference type="InterPro" id="IPR002301">
    <property type="entry name" value="Ile-tRNA-ligase"/>
</dbReference>
<dbReference type="InterPro" id="IPR023586">
    <property type="entry name" value="Ile-tRNA-ligase_type2"/>
</dbReference>
<dbReference type="InterPro" id="IPR013155">
    <property type="entry name" value="M/V/L/I-tRNA-synth_anticd-bd"/>
</dbReference>
<dbReference type="InterPro" id="IPR014729">
    <property type="entry name" value="Rossmann-like_a/b/a_fold"/>
</dbReference>
<dbReference type="InterPro" id="IPR009080">
    <property type="entry name" value="tRNAsynth_Ia_anticodon-bd"/>
</dbReference>
<dbReference type="InterPro" id="IPR009008">
    <property type="entry name" value="Val/Leu/Ile-tRNA-synth_edit"/>
</dbReference>
<dbReference type="NCBIfam" id="TIGR00392">
    <property type="entry name" value="ileS"/>
    <property type="match status" value="1"/>
</dbReference>
<dbReference type="PANTHER" id="PTHR42780:SF1">
    <property type="entry name" value="ISOLEUCINE--TRNA LIGASE, CYTOPLASMIC"/>
    <property type="match status" value="1"/>
</dbReference>
<dbReference type="PANTHER" id="PTHR42780">
    <property type="entry name" value="SOLEUCYL-TRNA SYNTHETASE"/>
    <property type="match status" value="1"/>
</dbReference>
<dbReference type="Pfam" id="PF08264">
    <property type="entry name" value="Anticodon_1"/>
    <property type="match status" value="1"/>
</dbReference>
<dbReference type="Pfam" id="PF19302">
    <property type="entry name" value="DUF5915"/>
    <property type="match status" value="1"/>
</dbReference>
<dbReference type="Pfam" id="PF00133">
    <property type="entry name" value="tRNA-synt_1"/>
    <property type="match status" value="1"/>
</dbReference>
<dbReference type="PRINTS" id="PR00984">
    <property type="entry name" value="TRNASYNTHILE"/>
</dbReference>
<dbReference type="SUPFAM" id="SSF47323">
    <property type="entry name" value="Anticodon-binding domain of a subclass of class I aminoacyl-tRNA synthetases"/>
    <property type="match status" value="2"/>
</dbReference>
<dbReference type="SUPFAM" id="SSF52374">
    <property type="entry name" value="Nucleotidylyl transferase"/>
    <property type="match status" value="1"/>
</dbReference>
<dbReference type="SUPFAM" id="SSF50677">
    <property type="entry name" value="ValRS/IleRS/LeuRS editing domain"/>
    <property type="match status" value="1"/>
</dbReference>
<dbReference type="PROSITE" id="PS00178">
    <property type="entry name" value="AA_TRNA_LIGASE_I"/>
    <property type="match status" value="1"/>
</dbReference>
<comment type="function">
    <text evidence="1">Catalyzes the attachment of isoleucine to tRNA(Ile). As IleRS can inadvertently accommodate and process structurally similar amino acids such as valine, to avoid such errors it has two additional distinct tRNA(Ile)-dependent editing activities. One activity is designated as 'pretransfer' editing and involves the hydrolysis of activated Val-AMP. The other activity is designated 'posttransfer' editing and involves deacylation of mischarged Val-tRNA(Ile).</text>
</comment>
<comment type="catalytic activity">
    <reaction evidence="1">
        <text>tRNA(Ile) + L-isoleucine + ATP = L-isoleucyl-tRNA(Ile) + AMP + diphosphate</text>
        <dbReference type="Rhea" id="RHEA:11060"/>
        <dbReference type="Rhea" id="RHEA-COMP:9666"/>
        <dbReference type="Rhea" id="RHEA-COMP:9695"/>
        <dbReference type="ChEBI" id="CHEBI:30616"/>
        <dbReference type="ChEBI" id="CHEBI:33019"/>
        <dbReference type="ChEBI" id="CHEBI:58045"/>
        <dbReference type="ChEBI" id="CHEBI:78442"/>
        <dbReference type="ChEBI" id="CHEBI:78528"/>
        <dbReference type="ChEBI" id="CHEBI:456215"/>
        <dbReference type="EC" id="6.1.1.5"/>
    </reaction>
</comment>
<comment type="cofactor">
    <cofactor evidence="1">
        <name>Zn(2+)</name>
        <dbReference type="ChEBI" id="CHEBI:29105"/>
    </cofactor>
</comment>
<comment type="subunit">
    <text evidence="1">Monomer.</text>
</comment>
<comment type="subcellular location">
    <subcellularLocation>
        <location evidence="1">Cytoplasm</location>
    </subcellularLocation>
</comment>
<comment type="domain">
    <text evidence="1">IleRS has two distinct active sites: one for aminoacylation and one for editing. The misactivated valine is translocated from the active site to the editing site, which sterically excludes the correctly activated isoleucine. The single editing site contains two valyl binding pockets, one specific for each substrate (Val-AMP or Val-tRNA(Ile)).</text>
</comment>
<comment type="similarity">
    <text evidence="1">Belongs to the class-I aminoacyl-tRNA synthetase family. IleS type 2 subfamily.</text>
</comment>
<comment type="sequence caution" evidence="2">
    <conflict type="erroneous initiation">
        <sequence resource="EMBL-CDS" id="CAC12008"/>
    </conflict>
</comment>